<accession>C1F513</accession>
<reference key="1">
    <citation type="journal article" date="2009" name="Appl. Environ. Microbiol.">
        <title>Three genomes from the phylum Acidobacteria provide insight into the lifestyles of these microorganisms in soils.</title>
        <authorList>
            <person name="Ward N.L."/>
            <person name="Challacombe J.F."/>
            <person name="Janssen P.H."/>
            <person name="Henrissat B."/>
            <person name="Coutinho P.M."/>
            <person name="Wu M."/>
            <person name="Xie G."/>
            <person name="Haft D.H."/>
            <person name="Sait M."/>
            <person name="Badger J."/>
            <person name="Barabote R.D."/>
            <person name="Bradley B."/>
            <person name="Brettin T.S."/>
            <person name="Brinkac L.M."/>
            <person name="Bruce D."/>
            <person name="Creasy T."/>
            <person name="Daugherty S.C."/>
            <person name="Davidsen T.M."/>
            <person name="DeBoy R.T."/>
            <person name="Detter J.C."/>
            <person name="Dodson R.J."/>
            <person name="Durkin A.S."/>
            <person name="Ganapathy A."/>
            <person name="Gwinn-Giglio M."/>
            <person name="Han C.S."/>
            <person name="Khouri H."/>
            <person name="Kiss H."/>
            <person name="Kothari S.P."/>
            <person name="Madupu R."/>
            <person name="Nelson K.E."/>
            <person name="Nelson W.C."/>
            <person name="Paulsen I."/>
            <person name="Penn K."/>
            <person name="Ren Q."/>
            <person name="Rosovitz M.J."/>
            <person name="Selengut J.D."/>
            <person name="Shrivastava S."/>
            <person name="Sullivan S.A."/>
            <person name="Tapia R."/>
            <person name="Thompson L.S."/>
            <person name="Watkins K.L."/>
            <person name="Yang Q."/>
            <person name="Yu C."/>
            <person name="Zafar N."/>
            <person name="Zhou L."/>
            <person name="Kuske C.R."/>
        </authorList>
    </citation>
    <scope>NUCLEOTIDE SEQUENCE [LARGE SCALE GENOMIC DNA]</scope>
    <source>
        <strain>ATCC 51196 / DSM 11244 / BCRC 80197 / JCM 7670 / NBRC 15755 / NCIMB 13165 / 161</strain>
    </source>
</reference>
<evidence type="ECO:0000255" key="1">
    <source>
        <dbReference type="HAMAP-Rule" id="MF_01216"/>
    </source>
</evidence>
<protein>
    <recommendedName>
        <fullName evidence="1">FMN-dependent NADH:quinone oxidoreductase</fullName>
        <ecNumber evidence="1">1.6.5.-</ecNumber>
    </recommendedName>
    <alternativeName>
        <fullName evidence="1">Azo-dye reductase</fullName>
    </alternativeName>
    <alternativeName>
        <fullName evidence="1">FMN-dependent NADH-azo compound oxidoreductase</fullName>
    </alternativeName>
    <alternativeName>
        <fullName evidence="1">FMN-dependent NADH-azoreductase</fullName>
        <ecNumber evidence="1">1.7.1.17</ecNumber>
    </alternativeName>
</protein>
<proteinExistence type="inferred from homology"/>
<feature type="chain" id="PRO_1000164752" description="FMN-dependent NADH:quinone oxidoreductase">
    <location>
        <begin position="1"/>
        <end position="206"/>
    </location>
</feature>
<feature type="binding site" evidence="1">
    <location>
        <position position="10"/>
    </location>
    <ligand>
        <name>FMN</name>
        <dbReference type="ChEBI" id="CHEBI:58210"/>
    </ligand>
</feature>
<feature type="binding site" evidence="1">
    <location>
        <begin position="15"/>
        <end position="17"/>
    </location>
    <ligand>
        <name>FMN</name>
        <dbReference type="ChEBI" id="CHEBI:58210"/>
    </ligand>
</feature>
<organism>
    <name type="scientific">Acidobacterium capsulatum (strain ATCC 51196 / DSM 11244 / BCRC 80197 / JCM 7670 / NBRC 15755 / NCIMB 13165 / 161)</name>
    <dbReference type="NCBI Taxonomy" id="240015"/>
    <lineage>
        <taxon>Bacteria</taxon>
        <taxon>Pseudomonadati</taxon>
        <taxon>Acidobacteriota</taxon>
        <taxon>Terriglobia</taxon>
        <taxon>Terriglobales</taxon>
        <taxon>Acidobacteriaceae</taxon>
        <taxon>Acidobacterium</taxon>
    </lineage>
</organism>
<sequence length="206" mass="22298">MLTLLRLDSSPLETSVSRALTDEFVAAWKAAHPDGVVIVRDLTLAPPPPVDAVWIGACFTPPPQRTAEQNDRLALSDAFLEELERADEYAIGVAMHNFSIPAVLKLWIDQVVRVGRTFAYSDGRPQGLLQGKKATILAATGGVYSAGTPAEGMNFLDPYLKTVLGFLGVRDIQVVTAGGTSQLRNPDVDREAFLEPVLQRVRETAA</sequence>
<name>AZOR_ACIC5</name>
<gene>
    <name evidence="1" type="primary">azoR</name>
    <name type="ordered locus">ACP_3099</name>
</gene>
<dbReference type="EC" id="1.6.5.-" evidence="1"/>
<dbReference type="EC" id="1.7.1.17" evidence="1"/>
<dbReference type="EMBL" id="CP001472">
    <property type="protein sequence ID" value="ACO34658.1"/>
    <property type="molecule type" value="Genomic_DNA"/>
</dbReference>
<dbReference type="RefSeq" id="WP_015898147.1">
    <property type="nucleotide sequence ID" value="NC_012483.1"/>
</dbReference>
<dbReference type="SMR" id="C1F513"/>
<dbReference type="FunCoup" id="C1F513">
    <property type="interactions" value="62"/>
</dbReference>
<dbReference type="STRING" id="240015.ACP_3099"/>
<dbReference type="KEGG" id="aca:ACP_3099"/>
<dbReference type="eggNOG" id="COG1182">
    <property type="taxonomic scope" value="Bacteria"/>
</dbReference>
<dbReference type="HOGENOM" id="CLU_088964_0_0_0"/>
<dbReference type="InParanoid" id="C1F513"/>
<dbReference type="OrthoDB" id="9805013at2"/>
<dbReference type="Proteomes" id="UP000002207">
    <property type="component" value="Chromosome"/>
</dbReference>
<dbReference type="GO" id="GO:0009055">
    <property type="term" value="F:electron transfer activity"/>
    <property type="evidence" value="ECO:0007669"/>
    <property type="project" value="UniProtKB-UniRule"/>
</dbReference>
<dbReference type="GO" id="GO:0010181">
    <property type="term" value="F:FMN binding"/>
    <property type="evidence" value="ECO:0007669"/>
    <property type="project" value="UniProtKB-UniRule"/>
</dbReference>
<dbReference type="GO" id="GO:0016652">
    <property type="term" value="F:oxidoreductase activity, acting on NAD(P)H as acceptor"/>
    <property type="evidence" value="ECO:0007669"/>
    <property type="project" value="UniProtKB-UniRule"/>
</dbReference>
<dbReference type="GO" id="GO:0016655">
    <property type="term" value="F:oxidoreductase activity, acting on NAD(P)H, quinone or similar compound as acceptor"/>
    <property type="evidence" value="ECO:0007669"/>
    <property type="project" value="InterPro"/>
</dbReference>
<dbReference type="Gene3D" id="3.40.50.360">
    <property type="match status" value="1"/>
</dbReference>
<dbReference type="HAMAP" id="MF_01216">
    <property type="entry name" value="Azoreductase_type1"/>
    <property type="match status" value="1"/>
</dbReference>
<dbReference type="InterPro" id="IPR003680">
    <property type="entry name" value="Flavodoxin_fold"/>
</dbReference>
<dbReference type="InterPro" id="IPR029039">
    <property type="entry name" value="Flavoprotein-like_sf"/>
</dbReference>
<dbReference type="InterPro" id="IPR050104">
    <property type="entry name" value="FMN-dep_NADH:Q_OxRdtase_AzoR1"/>
</dbReference>
<dbReference type="InterPro" id="IPR023048">
    <property type="entry name" value="NADH:quinone_OxRdtase_FMN_depd"/>
</dbReference>
<dbReference type="PANTHER" id="PTHR43741">
    <property type="entry name" value="FMN-DEPENDENT NADH-AZOREDUCTASE 1"/>
    <property type="match status" value="1"/>
</dbReference>
<dbReference type="PANTHER" id="PTHR43741:SF2">
    <property type="entry name" value="FMN-DEPENDENT NADH:QUINONE OXIDOREDUCTASE"/>
    <property type="match status" value="1"/>
</dbReference>
<dbReference type="Pfam" id="PF02525">
    <property type="entry name" value="Flavodoxin_2"/>
    <property type="match status" value="1"/>
</dbReference>
<dbReference type="SUPFAM" id="SSF52218">
    <property type="entry name" value="Flavoproteins"/>
    <property type="match status" value="1"/>
</dbReference>
<comment type="function">
    <text evidence="1">Quinone reductase that provides resistance to thiol-specific stress caused by electrophilic quinones.</text>
</comment>
<comment type="function">
    <text evidence="1">Also exhibits azoreductase activity. Catalyzes the reductive cleavage of the azo bond in aromatic azo compounds to the corresponding amines.</text>
</comment>
<comment type="catalytic activity">
    <reaction evidence="1">
        <text>2 a quinone + NADH + H(+) = 2 a 1,4-benzosemiquinone + NAD(+)</text>
        <dbReference type="Rhea" id="RHEA:65952"/>
        <dbReference type="ChEBI" id="CHEBI:15378"/>
        <dbReference type="ChEBI" id="CHEBI:57540"/>
        <dbReference type="ChEBI" id="CHEBI:57945"/>
        <dbReference type="ChEBI" id="CHEBI:132124"/>
        <dbReference type="ChEBI" id="CHEBI:134225"/>
    </reaction>
</comment>
<comment type="catalytic activity">
    <reaction evidence="1">
        <text>N,N-dimethyl-1,4-phenylenediamine + anthranilate + 2 NAD(+) = 2-(4-dimethylaminophenyl)diazenylbenzoate + 2 NADH + 2 H(+)</text>
        <dbReference type="Rhea" id="RHEA:55872"/>
        <dbReference type="ChEBI" id="CHEBI:15378"/>
        <dbReference type="ChEBI" id="CHEBI:15783"/>
        <dbReference type="ChEBI" id="CHEBI:16567"/>
        <dbReference type="ChEBI" id="CHEBI:57540"/>
        <dbReference type="ChEBI" id="CHEBI:57945"/>
        <dbReference type="ChEBI" id="CHEBI:71579"/>
        <dbReference type="EC" id="1.7.1.17"/>
    </reaction>
</comment>
<comment type="cofactor">
    <cofactor evidence="1">
        <name>FMN</name>
        <dbReference type="ChEBI" id="CHEBI:58210"/>
    </cofactor>
    <text evidence="1">Binds 1 FMN per subunit.</text>
</comment>
<comment type="subunit">
    <text evidence="1">Homodimer.</text>
</comment>
<comment type="similarity">
    <text evidence="1">Belongs to the azoreductase type 1 family.</text>
</comment>
<keyword id="KW-0285">Flavoprotein</keyword>
<keyword id="KW-0288">FMN</keyword>
<keyword id="KW-0520">NAD</keyword>
<keyword id="KW-0560">Oxidoreductase</keyword>
<keyword id="KW-1185">Reference proteome</keyword>